<protein>
    <recommendedName>
        <fullName evidence="1">Putative glutamate--cysteine ligase 2</fullName>
        <ecNumber evidence="1">6.3.2.2</ecNumber>
    </recommendedName>
    <alternativeName>
        <fullName evidence="1">Gamma-glutamylcysteine synthetase 2</fullName>
        <shortName evidence="1">GCS 2</shortName>
        <shortName evidence="1">Gamma-GCS 2</shortName>
    </alternativeName>
</protein>
<name>GCS2_PSEPK</name>
<evidence type="ECO:0000255" key="1">
    <source>
        <dbReference type="HAMAP-Rule" id="MF_01609"/>
    </source>
</evidence>
<organism>
    <name type="scientific">Pseudomonas putida (strain ATCC 47054 / DSM 6125 / CFBP 8728 / NCIMB 11950 / KT2440)</name>
    <dbReference type="NCBI Taxonomy" id="160488"/>
    <lineage>
        <taxon>Bacteria</taxon>
        <taxon>Pseudomonadati</taxon>
        <taxon>Pseudomonadota</taxon>
        <taxon>Gammaproteobacteria</taxon>
        <taxon>Pseudomonadales</taxon>
        <taxon>Pseudomonadaceae</taxon>
        <taxon>Pseudomonas</taxon>
    </lineage>
</organism>
<dbReference type="EC" id="6.3.2.2" evidence="1"/>
<dbReference type="EMBL" id="AE015451">
    <property type="protein sequence ID" value="AAN68860.1"/>
    <property type="molecule type" value="Genomic_DNA"/>
</dbReference>
<dbReference type="RefSeq" id="NP_745396.1">
    <property type="nucleotide sequence ID" value="NC_002947.4"/>
</dbReference>
<dbReference type="RefSeq" id="WP_010954135.1">
    <property type="nucleotide sequence ID" value="NZ_CP169744.1"/>
</dbReference>
<dbReference type="SMR" id="Q88HV0"/>
<dbReference type="STRING" id="160488.PP_3253"/>
<dbReference type="PaxDb" id="160488-PP_3253"/>
<dbReference type="KEGG" id="ppu:PP_3253"/>
<dbReference type="PATRIC" id="fig|160488.4.peg.3456"/>
<dbReference type="eggNOG" id="COG2170">
    <property type="taxonomic scope" value="Bacteria"/>
</dbReference>
<dbReference type="HOGENOM" id="CLU_044848_0_1_6"/>
<dbReference type="OrthoDB" id="9769628at2"/>
<dbReference type="PhylomeDB" id="Q88HV0"/>
<dbReference type="BioCyc" id="PPUT160488:G1G01-3479-MONOMER"/>
<dbReference type="Proteomes" id="UP000000556">
    <property type="component" value="Chromosome"/>
</dbReference>
<dbReference type="GO" id="GO:0005524">
    <property type="term" value="F:ATP binding"/>
    <property type="evidence" value="ECO:0007669"/>
    <property type="project" value="UniProtKB-KW"/>
</dbReference>
<dbReference type="GO" id="GO:0004357">
    <property type="term" value="F:glutamate-cysteine ligase activity"/>
    <property type="evidence" value="ECO:0007669"/>
    <property type="project" value="UniProtKB-EC"/>
</dbReference>
<dbReference type="GO" id="GO:0042398">
    <property type="term" value="P:modified amino acid biosynthetic process"/>
    <property type="evidence" value="ECO:0007669"/>
    <property type="project" value="InterPro"/>
</dbReference>
<dbReference type="Gene3D" id="3.30.590.20">
    <property type="match status" value="1"/>
</dbReference>
<dbReference type="HAMAP" id="MF_01609">
    <property type="entry name" value="Glu_cys_ligase_2"/>
    <property type="match status" value="1"/>
</dbReference>
<dbReference type="InterPro" id="IPR050141">
    <property type="entry name" value="GCL_type2/YbdK_subfam"/>
</dbReference>
<dbReference type="InterPro" id="IPR006336">
    <property type="entry name" value="GCS2"/>
</dbReference>
<dbReference type="InterPro" id="IPR014746">
    <property type="entry name" value="Gln_synth/guanido_kin_cat_dom"/>
</dbReference>
<dbReference type="InterPro" id="IPR011793">
    <property type="entry name" value="YbdK"/>
</dbReference>
<dbReference type="NCBIfam" id="TIGR02050">
    <property type="entry name" value="gshA_cyan_rel"/>
    <property type="match status" value="1"/>
</dbReference>
<dbReference type="NCBIfam" id="NF010039">
    <property type="entry name" value="PRK13515.1"/>
    <property type="match status" value="1"/>
</dbReference>
<dbReference type="PANTHER" id="PTHR36510">
    <property type="entry name" value="GLUTAMATE--CYSTEINE LIGASE 2-RELATED"/>
    <property type="match status" value="1"/>
</dbReference>
<dbReference type="PANTHER" id="PTHR36510:SF1">
    <property type="entry name" value="GLUTAMATE--CYSTEINE LIGASE 2-RELATED"/>
    <property type="match status" value="1"/>
</dbReference>
<dbReference type="Pfam" id="PF04107">
    <property type="entry name" value="GCS2"/>
    <property type="match status" value="1"/>
</dbReference>
<dbReference type="SUPFAM" id="SSF55931">
    <property type="entry name" value="Glutamine synthetase/guanido kinase"/>
    <property type="match status" value="1"/>
</dbReference>
<proteinExistence type="inferred from homology"/>
<gene>
    <name type="ordered locus">PP_3253</name>
</gene>
<keyword id="KW-0067">ATP-binding</keyword>
<keyword id="KW-0436">Ligase</keyword>
<keyword id="KW-0547">Nucleotide-binding</keyword>
<keyword id="KW-1185">Reference proteome</keyword>
<comment type="function">
    <text evidence="1">ATP-dependent carboxylate-amine ligase which exhibits weak glutamate--cysteine ligase activity.</text>
</comment>
<comment type="catalytic activity">
    <reaction evidence="1">
        <text>L-cysteine + L-glutamate + ATP = gamma-L-glutamyl-L-cysteine + ADP + phosphate + H(+)</text>
        <dbReference type="Rhea" id="RHEA:13285"/>
        <dbReference type="ChEBI" id="CHEBI:15378"/>
        <dbReference type="ChEBI" id="CHEBI:29985"/>
        <dbReference type="ChEBI" id="CHEBI:30616"/>
        <dbReference type="ChEBI" id="CHEBI:35235"/>
        <dbReference type="ChEBI" id="CHEBI:43474"/>
        <dbReference type="ChEBI" id="CHEBI:58173"/>
        <dbReference type="ChEBI" id="CHEBI:456216"/>
        <dbReference type="EC" id="6.3.2.2"/>
    </reaction>
</comment>
<comment type="similarity">
    <text evidence="1">Belongs to the glutamate--cysteine ligase type 2 family. YbdK subfamily.</text>
</comment>
<sequence>MIRPCTFGIEEEYLLVNLGSGQVPATPSPAVMGRCREALGRYFAQEMFRSQIELASPVFTNLYEAREFLQRNRQRLRVALAEEGMGPYAAASHPCAAWLLQKPAAQGHYKQLFDDYRHVARRSLLNGLHVHVGVPPACDRMQLINRLLPWLPLLLALSTSSPLWAGQPTGYLSYRRVICGEWPHMGLPEALPDWAAYERYRALLQRTGALAADGDLWWALRPSRRYPTVELRICDGCPNLEDVLCIAALFRHLVEHSIAYRHDPLPCSRELRWIAQENYWRAMRHGRHAQFIGCHEQQPVTAQGWLAQLQAQIPIDSADAERACQHALHVLRHGTHADQQLRCLAQARADGLGKGQALRAVVAAGTCI</sequence>
<reference key="1">
    <citation type="journal article" date="2002" name="Environ. Microbiol.">
        <title>Complete genome sequence and comparative analysis of the metabolically versatile Pseudomonas putida KT2440.</title>
        <authorList>
            <person name="Nelson K.E."/>
            <person name="Weinel C."/>
            <person name="Paulsen I.T."/>
            <person name="Dodson R.J."/>
            <person name="Hilbert H."/>
            <person name="Martins dos Santos V.A.P."/>
            <person name="Fouts D.E."/>
            <person name="Gill S.R."/>
            <person name="Pop M."/>
            <person name="Holmes M."/>
            <person name="Brinkac L.M."/>
            <person name="Beanan M.J."/>
            <person name="DeBoy R.T."/>
            <person name="Daugherty S.C."/>
            <person name="Kolonay J.F."/>
            <person name="Madupu R."/>
            <person name="Nelson W.C."/>
            <person name="White O."/>
            <person name="Peterson J.D."/>
            <person name="Khouri H.M."/>
            <person name="Hance I."/>
            <person name="Chris Lee P."/>
            <person name="Holtzapple E.K."/>
            <person name="Scanlan D."/>
            <person name="Tran K."/>
            <person name="Moazzez A."/>
            <person name="Utterback T.R."/>
            <person name="Rizzo M."/>
            <person name="Lee K."/>
            <person name="Kosack D."/>
            <person name="Moestl D."/>
            <person name="Wedler H."/>
            <person name="Lauber J."/>
            <person name="Stjepandic D."/>
            <person name="Hoheisel J."/>
            <person name="Straetz M."/>
            <person name="Heim S."/>
            <person name="Kiewitz C."/>
            <person name="Eisen J.A."/>
            <person name="Timmis K.N."/>
            <person name="Duesterhoeft A."/>
            <person name="Tuemmler B."/>
            <person name="Fraser C.M."/>
        </authorList>
    </citation>
    <scope>NUCLEOTIDE SEQUENCE [LARGE SCALE GENOMIC DNA]</scope>
    <source>
        <strain>ATCC 47054 / DSM 6125 / CFBP 8728 / NCIMB 11950 / KT2440</strain>
    </source>
</reference>
<accession>Q88HV0</accession>
<feature type="chain" id="PRO_0000218212" description="Putative glutamate--cysteine ligase 2">
    <location>
        <begin position="1"/>
        <end position="368"/>
    </location>
</feature>